<accession>D2TDP0</accession>
<organism>
    <name type="scientific">Erwinia pyrifoliae (strain DSM 12163 / CIP 106111 / Ep16/96)</name>
    <dbReference type="NCBI Taxonomy" id="644651"/>
    <lineage>
        <taxon>Bacteria</taxon>
        <taxon>Pseudomonadati</taxon>
        <taxon>Pseudomonadota</taxon>
        <taxon>Gammaproteobacteria</taxon>
        <taxon>Enterobacterales</taxon>
        <taxon>Erwiniaceae</taxon>
        <taxon>Erwinia</taxon>
    </lineage>
</organism>
<reference key="1">
    <citation type="journal article" date="2010" name="BMC Genomics">
        <title>Complete genome sequence of the fire blight pathogen Erwinia pyrifoliae DSM 12163T and comparative genomic insights into plant pathogenicity.</title>
        <authorList>
            <person name="Smits T.H."/>
            <person name="Jaenicke S."/>
            <person name="Rezzonico F."/>
            <person name="Kamber T."/>
            <person name="Goesmann A."/>
            <person name="Frey J.E."/>
            <person name="Duffy B."/>
        </authorList>
    </citation>
    <scope>NUCLEOTIDE SEQUENCE [LARGE SCALE GENOMIC DNA]</scope>
    <source>
        <strain>DSM 12163 / CIP 106111 / Ep16/96</strain>
    </source>
</reference>
<feature type="chain" id="PRO_0000403215" description="Alkanesulfonate monooxygenase">
    <location>
        <begin position="1"/>
        <end position="383"/>
    </location>
</feature>
<keyword id="KW-0285">Flavoprotein</keyword>
<keyword id="KW-0288">FMN</keyword>
<keyword id="KW-0503">Monooxygenase</keyword>
<keyword id="KW-0560">Oxidoreductase</keyword>
<proteinExistence type="inferred from homology"/>
<sequence>MRLSVFWFLPTHGDGKYLGTNEGARPVDHAYLQQIAQAADRLGFGGVLIPTGRSCEDAWLVAASLIPVTQRLRFLVALRPGVISPTQAARQAATLDRLSNGRALFNLVTGGDAEELAGDGVFLDHGERYAESAEFTRVWRRVLEGETVDYKGKHVHVRGARLMFKPVQQPRPPLWFGGSSEVAQDLAAEQVDVYLTWGEPPAQVKEKIARVQAKAAARGRKVRFGIRLHVIVRETNDEAWQAADRLISHLDDQTIAKAQAALARTDSVGQQRMAALHGGKRDRLEISPNLWAGVGLVRGGAGTALVGDGPTVAARMQEYADLGIETFILSGYPHLEEAYRVGELLFPHLELNIPEVPKPAAVQAHGEHVAHDFAPQKVPQGER</sequence>
<comment type="function">
    <text evidence="1">Catalyzes the desulfonation of aliphatic sulfonates.</text>
</comment>
<comment type="catalytic activity">
    <reaction evidence="1">
        <text>an alkanesulfonate + FMNH2 + O2 = an aldehyde + FMN + sulfite + H2O + 2 H(+)</text>
        <dbReference type="Rhea" id="RHEA:23064"/>
        <dbReference type="ChEBI" id="CHEBI:15377"/>
        <dbReference type="ChEBI" id="CHEBI:15378"/>
        <dbReference type="ChEBI" id="CHEBI:15379"/>
        <dbReference type="ChEBI" id="CHEBI:17359"/>
        <dbReference type="ChEBI" id="CHEBI:17478"/>
        <dbReference type="ChEBI" id="CHEBI:57618"/>
        <dbReference type="ChEBI" id="CHEBI:58210"/>
        <dbReference type="ChEBI" id="CHEBI:134249"/>
        <dbReference type="EC" id="1.14.14.5"/>
    </reaction>
</comment>
<comment type="subunit">
    <text evidence="1">Homotetramer.</text>
</comment>
<comment type="miscellaneous">
    <text evidence="1">FMNH(2) which is absolutely required for this enzymatic reaction, is provided by SsuE.</text>
</comment>
<comment type="similarity">
    <text evidence="1">Belongs to the SsuD family.</text>
</comment>
<comment type="sequence caution" evidence="2">
    <conflict type="erroneous initiation">
        <sequence resource="EMBL-CDS" id="CAY74807"/>
    </conflict>
    <text>Truncated N-terminus.</text>
</comment>
<dbReference type="EC" id="1.14.14.5" evidence="1"/>
<dbReference type="EMBL" id="FN392235">
    <property type="protein sequence ID" value="CAY74807.1"/>
    <property type="status" value="ALT_INIT"/>
    <property type="molecule type" value="Genomic_DNA"/>
</dbReference>
<dbReference type="RefSeq" id="WP_012668534.1">
    <property type="nucleotide sequence ID" value="NC_017390.1"/>
</dbReference>
<dbReference type="SMR" id="D2TDP0"/>
<dbReference type="GeneID" id="92236593"/>
<dbReference type="KEGG" id="epr:EPYR_02427"/>
<dbReference type="PATRIC" id="fig|644651.3.peg.2216"/>
<dbReference type="HOGENOM" id="CLU_027853_1_0_6"/>
<dbReference type="OrthoDB" id="9814695at2"/>
<dbReference type="GO" id="GO:0008726">
    <property type="term" value="F:alkanesulfonate monooxygenase activity"/>
    <property type="evidence" value="ECO:0007669"/>
    <property type="project" value="UniProtKB-UniRule"/>
</dbReference>
<dbReference type="GO" id="GO:0046306">
    <property type="term" value="P:alkanesulfonate catabolic process"/>
    <property type="evidence" value="ECO:0007669"/>
    <property type="project" value="TreeGrafter"/>
</dbReference>
<dbReference type="CDD" id="cd01094">
    <property type="entry name" value="Alkanesulfonate_monoxygenase"/>
    <property type="match status" value="1"/>
</dbReference>
<dbReference type="FunFam" id="3.20.20.30:FF:000001">
    <property type="entry name" value="Alkanesulfonate monooxygenase"/>
    <property type="match status" value="1"/>
</dbReference>
<dbReference type="Gene3D" id="3.20.20.30">
    <property type="entry name" value="Luciferase-like domain"/>
    <property type="match status" value="1"/>
</dbReference>
<dbReference type="HAMAP" id="MF_01229">
    <property type="entry name" value="Alkanesulf_monooxygen"/>
    <property type="match status" value="1"/>
</dbReference>
<dbReference type="InterPro" id="IPR019911">
    <property type="entry name" value="Alkanesulphonate_mOase_FMN-dep"/>
</dbReference>
<dbReference type="InterPro" id="IPR011251">
    <property type="entry name" value="Luciferase-like_dom"/>
</dbReference>
<dbReference type="InterPro" id="IPR036661">
    <property type="entry name" value="Luciferase-like_sf"/>
</dbReference>
<dbReference type="InterPro" id="IPR050172">
    <property type="entry name" value="SsuD_RutA_monooxygenase"/>
</dbReference>
<dbReference type="NCBIfam" id="TIGR03565">
    <property type="entry name" value="alk_sulf_monoox"/>
    <property type="match status" value="1"/>
</dbReference>
<dbReference type="NCBIfam" id="NF001939">
    <property type="entry name" value="PRK00719.1"/>
    <property type="match status" value="1"/>
</dbReference>
<dbReference type="PANTHER" id="PTHR42847">
    <property type="entry name" value="ALKANESULFONATE MONOOXYGENASE"/>
    <property type="match status" value="1"/>
</dbReference>
<dbReference type="PANTHER" id="PTHR42847:SF4">
    <property type="entry name" value="ALKANESULFONATE MONOOXYGENASE-RELATED"/>
    <property type="match status" value="1"/>
</dbReference>
<dbReference type="Pfam" id="PF00296">
    <property type="entry name" value="Bac_luciferase"/>
    <property type="match status" value="1"/>
</dbReference>
<dbReference type="SUPFAM" id="SSF51679">
    <property type="entry name" value="Bacterial luciferase-like"/>
    <property type="match status" value="1"/>
</dbReference>
<gene>
    <name evidence="1" type="primary">ssuD</name>
    <name type="ordered locus">EPYR_02427</name>
</gene>
<name>SSUD_ERWP6</name>
<protein>
    <recommendedName>
        <fullName evidence="1">Alkanesulfonate monooxygenase</fullName>
        <ecNumber evidence="1">1.14.14.5</ecNumber>
    </recommendedName>
    <alternativeName>
        <fullName evidence="1">FMNH2-dependent aliphatic sulfonate monooxygenase</fullName>
    </alternativeName>
</protein>
<evidence type="ECO:0000255" key="1">
    <source>
        <dbReference type="HAMAP-Rule" id="MF_01229"/>
    </source>
</evidence>
<evidence type="ECO:0000305" key="2"/>